<feature type="chain" id="PRO_0000065994" description="Chain length determinant protein">
    <location>
        <begin position="1"/>
        <end position="325"/>
    </location>
</feature>
<feature type="topological domain" description="Cytoplasmic" evidence="1">
    <location>
        <begin position="1"/>
        <end position="31"/>
    </location>
</feature>
<feature type="transmembrane region" description="Helical" evidence="1">
    <location>
        <begin position="32"/>
        <end position="52"/>
    </location>
</feature>
<feature type="topological domain" description="Periplasmic" evidence="1">
    <location>
        <begin position="53"/>
        <end position="294"/>
    </location>
</feature>
<feature type="transmembrane region" description="Helical" evidence="1">
    <location>
        <begin position="295"/>
        <end position="315"/>
    </location>
</feature>
<feature type="topological domain" description="Cytoplasmic" evidence="1">
    <location>
        <begin position="316"/>
        <end position="325"/>
    </location>
</feature>
<name>WZZB_SHIDY</name>
<keyword id="KW-0997">Cell inner membrane</keyword>
<keyword id="KW-1003">Cell membrane</keyword>
<keyword id="KW-0448">Lipopolysaccharide biosynthesis</keyword>
<keyword id="KW-0472">Membrane</keyword>
<keyword id="KW-0812">Transmembrane</keyword>
<keyword id="KW-1133">Transmembrane helix</keyword>
<organism>
    <name type="scientific">Shigella dysenteriae</name>
    <dbReference type="NCBI Taxonomy" id="622"/>
    <lineage>
        <taxon>Bacteria</taxon>
        <taxon>Pseudomonadati</taxon>
        <taxon>Pseudomonadota</taxon>
        <taxon>Gammaproteobacteria</taxon>
        <taxon>Enterobacterales</taxon>
        <taxon>Enterobacteriaceae</taxon>
        <taxon>Shigella</taxon>
    </lineage>
</organism>
<proteinExistence type="inferred from homology"/>
<gene>
    <name type="primary">wzzB</name>
    <name type="synonym">cld</name>
    <name type="synonym">rol</name>
</gene>
<evidence type="ECO:0000255" key="1"/>
<evidence type="ECO:0000305" key="2"/>
<accession>P95730</accession>
<dbReference type="EMBL" id="Y07560">
    <property type="protein sequence ID" value="CAA68845.1"/>
    <property type="molecule type" value="Genomic_DNA"/>
</dbReference>
<dbReference type="RefSeq" id="WP_005021694.1">
    <property type="nucleotide sequence ID" value="NZ_UAUQ01000007.1"/>
</dbReference>
<dbReference type="SMR" id="P95730"/>
<dbReference type="UniPathway" id="UPA00030"/>
<dbReference type="GO" id="GO:0005886">
    <property type="term" value="C:plasma membrane"/>
    <property type="evidence" value="ECO:0007669"/>
    <property type="project" value="UniProtKB-SubCell"/>
</dbReference>
<dbReference type="GO" id="GO:0004713">
    <property type="term" value="F:protein tyrosine kinase activity"/>
    <property type="evidence" value="ECO:0007669"/>
    <property type="project" value="TreeGrafter"/>
</dbReference>
<dbReference type="GO" id="GO:0009103">
    <property type="term" value="P:lipopolysaccharide biosynthetic process"/>
    <property type="evidence" value="ECO:0007669"/>
    <property type="project" value="UniProtKB-UniPathway"/>
</dbReference>
<dbReference type="FunFam" id="3.30.1890.10:FF:000002">
    <property type="entry name" value="O-antigen chain length determinant protein"/>
    <property type="match status" value="1"/>
</dbReference>
<dbReference type="Gene3D" id="3.30.1890.10">
    <property type="entry name" value="FepE-like"/>
    <property type="match status" value="1"/>
</dbReference>
<dbReference type="InterPro" id="IPR050445">
    <property type="entry name" value="Bact_polysacc_biosynth/exp"/>
</dbReference>
<dbReference type="InterPro" id="IPR003856">
    <property type="entry name" value="LPS_length_determ_N_term"/>
</dbReference>
<dbReference type="NCBIfam" id="NF012015">
    <property type="entry name" value="PRK15471.1"/>
    <property type="match status" value="1"/>
</dbReference>
<dbReference type="PANTHER" id="PTHR32309:SF29">
    <property type="entry name" value="CHAIN LENGTH DETERMINANT PROTEIN"/>
    <property type="match status" value="1"/>
</dbReference>
<dbReference type="PANTHER" id="PTHR32309">
    <property type="entry name" value="TYROSINE-PROTEIN KINASE"/>
    <property type="match status" value="1"/>
</dbReference>
<dbReference type="Pfam" id="PF02706">
    <property type="entry name" value="Wzz"/>
    <property type="match status" value="1"/>
</dbReference>
<dbReference type="SUPFAM" id="SSF160355">
    <property type="entry name" value="Bacterial polysaccharide co-polymerase-like"/>
    <property type="match status" value="1"/>
</dbReference>
<sequence>MRVENNNVSGQNHDPEQIDLIDLLVQLWRGKMTIIISVIVAIALAIGYLAVAKEKWTSTAIVTQPDVGQIAGYNNAMNVIYGQATPKVSDLQETLIGRFSSAFSALAETLDNQEEPEKLTIEPSVKNQQLPLTVSYVGQTAEGAQMKLAQYIQQVDDKVNQELEKDLKDNIALGRKNLQDSLRTQEVVAQEQKDLRIRQIQEALQYANQAQVTKPQVQQTEDVTQDTLFLLGSEALESMIKHEATRPLVFSPSYYQTRQNLLDIENLKVDDLDIHAYRYVMKPTLPIRRDSPKKAITLILAVLLGGMVGAGIVLGRNALRNYNAK</sequence>
<protein>
    <recommendedName>
        <fullName>Chain length determinant protein</fullName>
    </recommendedName>
    <alternativeName>
        <fullName>Polysaccharide antigen chain regulator</fullName>
    </alternativeName>
</protein>
<reference key="1">
    <citation type="journal article" date="1997" name="J. Bacteriol.">
        <title>Influence of different rol gene products on the chain length of Shigella dysenteriae type 1 lipopolysaccharide O antigen expressed by Shigella flexneri carrier strains.</title>
        <authorList>
            <person name="Klee S.R."/>
            <person name="Tzschaschel B.D."/>
            <person name="Timmis K.N."/>
            <person name="Guzman C.A."/>
        </authorList>
    </citation>
    <scope>NUCLEOTIDE SEQUENCE [GENOMIC DNA]</scope>
    <source>
        <strain>W30864</strain>
    </source>
</reference>
<comment type="function">
    <text>Confers a modal distribution of chain length on the O-antigen component of lipopolysaccharide (LPS). Gives rise to a reduced number of short chain molecules and increases in numbers of longer molecules.</text>
</comment>
<comment type="pathway">
    <text>Bacterial outer membrane biogenesis; lipopolysaccharide biosynthesis.</text>
</comment>
<comment type="subcellular location">
    <subcellularLocation>
        <location>Cell inner membrane</location>
        <topology>Multi-pass membrane protein</topology>
    </subcellularLocation>
</comment>
<comment type="similarity">
    <text evidence="2">Belongs to the WzzB/Cld/Rol family.</text>
</comment>